<feature type="chain" id="PRO_0000073347" description="ATP synthase gamma chain">
    <location>
        <begin position="1"/>
        <end position="286"/>
    </location>
</feature>
<organism>
    <name type="scientific">Pseudomonas putida (strain ATCC 47054 / DSM 6125 / CFBP 8728 / NCIMB 11950 / KT2440)</name>
    <dbReference type="NCBI Taxonomy" id="160488"/>
    <lineage>
        <taxon>Bacteria</taxon>
        <taxon>Pseudomonadati</taxon>
        <taxon>Pseudomonadota</taxon>
        <taxon>Gammaproteobacteria</taxon>
        <taxon>Pseudomonadales</taxon>
        <taxon>Pseudomonadaceae</taxon>
        <taxon>Pseudomonas</taxon>
    </lineage>
</organism>
<keyword id="KW-0066">ATP synthesis</keyword>
<keyword id="KW-0997">Cell inner membrane</keyword>
<keyword id="KW-1003">Cell membrane</keyword>
<keyword id="KW-0139">CF(1)</keyword>
<keyword id="KW-0375">Hydrogen ion transport</keyword>
<keyword id="KW-0406">Ion transport</keyword>
<keyword id="KW-0472">Membrane</keyword>
<keyword id="KW-1185">Reference proteome</keyword>
<keyword id="KW-0813">Transport</keyword>
<reference key="1">
    <citation type="journal article" date="2002" name="Environ. Microbiol.">
        <title>Complete genome sequence and comparative analysis of the metabolically versatile Pseudomonas putida KT2440.</title>
        <authorList>
            <person name="Nelson K.E."/>
            <person name="Weinel C."/>
            <person name="Paulsen I.T."/>
            <person name="Dodson R.J."/>
            <person name="Hilbert H."/>
            <person name="Martins dos Santos V.A.P."/>
            <person name="Fouts D.E."/>
            <person name="Gill S.R."/>
            <person name="Pop M."/>
            <person name="Holmes M."/>
            <person name="Brinkac L.M."/>
            <person name="Beanan M.J."/>
            <person name="DeBoy R.T."/>
            <person name="Daugherty S.C."/>
            <person name="Kolonay J.F."/>
            <person name="Madupu R."/>
            <person name="Nelson W.C."/>
            <person name="White O."/>
            <person name="Peterson J.D."/>
            <person name="Khouri H.M."/>
            <person name="Hance I."/>
            <person name="Chris Lee P."/>
            <person name="Holtzapple E.K."/>
            <person name="Scanlan D."/>
            <person name="Tran K."/>
            <person name="Moazzez A."/>
            <person name="Utterback T.R."/>
            <person name="Rizzo M."/>
            <person name="Lee K."/>
            <person name="Kosack D."/>
            <person name="Moestl D."/>
            <person name="Wedler H."/>
            <person name="Lauber J."/>
            <person name="Stjepandic D."/>
            <person name="Hoheisel J."/>
            <person name="Straetz M."/>
            <person name="Heim S."/>
            <person name="Kiewitz C."/>
            <person name="Eisen J.A."/>
            <person name="Timmis K.N."/>
            <person name="Duesterhoeft A."/>
            <person name="Tuemmler B."/>
            <person name="Fraser C.M."/>
        </authorList>
    </citation>
    <scope>NUCLEOTIDE SEQUENCE [LARGE SCALE GENOMIC DNA]</scope>
    <source>
        <strain>ATCC 47054 / DSM 6125 / CFBP 8728 / NCIMB 11950 / KT2440</strain>
    </source>
</reference>
<sequence length="286" mass="31464">MAGAKEIRSKIASIKSTQKITSAMEKVAVSKMRKAQMRMAASRPYAERIRQVIGHLANANPEYRHPFMIERPVKRAGYIVVSSDRGLCGGLNTNLFKALVKDMSANREQGVEIDLCVIGSKGATFFRIFGGNVVAAISHLGEEPSINDLIGSVKVMLDAYLDGRIDRLSVVSNKFINTMTQKPTVEQLVPLVATPDQDLKHHWDYLYEPDAKELLDGLMVRYVESQVYQAVVENNAAEQAARMIAMKNATDNAGDLIKELQLIYNKARQAAITQEISEIVGGAAAV</sequence>
<dbReference type="EMBL" id="AE015451">
    <property type="protein sequence ID" value="AAN70978.1"/>
    <property type="molecule type" value="Genomic_DNA"/>
</dbReference>
<dbReference type="RefSeq" id="NP_747514.1">
    <property type="nucleotide sequence ID" value="NC_002947.4"/>
</dbReference>
<dbReference type="RefSeq" id="WP_003253195.1">
    <property type="nucleotide sequence ID" value="NZ_CP169744.1"/>
</dbReference>
<dbReference type="SMR" id="Q88BX3"/>
<dbReference type="STRING" id="160488.PP_5414"/>
<dbReference type="PaxDb" id="160488-PP_5414"/>
<dbReference type="GeneID" id="90539521"/>
<dbReference type="KEGG" id="ppu:PP_5414"/>
<dbReference type="PATRIC" id="fig|160488.4.peg.5782"/>
<dbReference type="eggNOG" id="COG0224">
    <property type="taxonomic scope" value="Bacteria"/>
</dbReference>
<dbReference type="HOGENOM" id="CLU_050669_0_1_6"/>
<dbReference type="OrthoDB" id="9812769at2"/>
<dbReference type="PhylomeDB" id="Q88BX3"/>
<dbReference type="BioCyc" id="PPUT160488:G1G01-5780-MONOMER"/>
<dbReference type="Proteomes" id="UP000000556">
    <property type="component" value="Chromosome"/>
</dbReference>
<dbReference type="GO" id="GO:0005886">
    <property type="term" value="C:plasma membrane"/>
    <property type="evidence" value="ECO:0007669"/>
    <property type="project" value="UniProtKB-SubCell"/>
</dbReference>
<dbReference type="GO" id="GO:0045259">
    <property type="term" value="C:proton-transporting ATP synthase complex"/>
    <property type="evidence" value="ECO:0007669"/>
    <property type="project" value="UniProtKB-KW"/>
</dbReference>
<dbReference type="GO" id="GO:0005524">
    <property type="term" value="F:ATP binding"/>
    <property type="evidence" value="ECO:0007669"/>
    <property type="project" value="UniProtKB-UniRule"/>
</dbReference>
<dbReference type="GO" id="GO:0046933">
    <property type="term" value="F:proton-transporting ATP synthase activity, rotational mechanism"/>
    <property type="evidence" value="ECO:0007669"/>
    <property type="project" value="UniProtKB-UniRule"/>
</dbReference>
<dbReference type="GO" id="GO:0042777">
    <property type="term" value="P:proton motive force-driven plasma membrane ATP synthesis"/>
    <property type="evidence" value="ECO:0007669"/>
    <property type="project" value="UniProtKB-UniRule"/>
</dbReference>
<dbReference type="CDD" id="cd12151">
    <property type="entry name" value="F1-ATPase_gamma"/>
    <property type="match status" value="1"/>
</dbReference>
<dbReference type="FunFam" id="1.10.287.80:FF:000005">
    <property type="entry name" value="ATP synthase gamma chain"/>
    <property type="match status" value="1"/>
</dbReference>
<dbReference type="FunFam" id="3.40.1380.10:FF:000001">
    <property type="entry name" value="ATP synthase gamma chain"/>
    <property type="match status" value="1"/>
</dbReference>
<dbReference type="Gene3D" id="3.40.1380.10">
    <property type="match status" value="1"/>
</dbReference>
<dbReference type="Gene3D" id="1.10.287.80">
    <property type="entry name" value="ATP synthase, gamma subunit, helix hairpin domain"/>
    <property type="match status" value="1"/>
</dbReference>
<dbReference type="HAMAP" id="MF_00815">
    <property type="entry name" value="ATP_synth_gamma_bact"/>
    <property type="match status" value="1"/>
</dbReference>
<dbReference type="InterPro" id="IPR035968">
    <property type="entry name" value="ATP_synth_F1_ATPase_gsu"/>
</dbReference>
<dbReference type="InterPro" id="IPR000131">
    <property type="entry name" value="ATP_synth_F1_gsu"/>
</dbReference>
<dbReference type="InterPro" id="IPR023632">
    <property type="entry name" value="ATP_synth_F1_gsu_CS"/>
</dbReference>
<dbReference type="NCBIfam" id="TIGR01146">
    <property type="entry name" value="ATPsyn_F1gamma"/>
    <property type="match status" value="1"/>
</dbReference>
<dbReference type="NCBIfam" id="NF004144">
    <property type="entry name" value="PRK05621.1-1"/>
    <property type="match status" value="1"/>
</dbReference>
<dbReference type="PANTHER" id="PTHR11693">
    <property type="entry name" value="ATP SYNTHASE GAMMA CHAIN"/>
    <property type="match status" value="1"/>
</dbReference>
<dbReference type="PANTHER" id="PTHR11693:SF22">
    <property type="entry name" value="ATP SYNTHASE SUBUNIT GAMMA, MITOCHONDRIAL"/>
    <property type="match status" value="1"/>
</dbReference>
<dbReference type="Pfam" id="PF00231">
    <property type="entry name" value="ATP-synt"/>
    <property type="match status" value="1"/>
</dbReference>
<dbReference type="PRINTS" id="PR00126">
    <property type="entry name" value="ATPASEGAMMA"/>
</dbReference>
<dbReference type="SUPFAM" id="SSF52943">
    <property type="entry name" value="ATP synthase (F1-ATPase), gamma subunit"/>
    <property type="match status" value="1"/>
</dbReference>
<dbReference type="PROSITE" id="PS00153">
    <property type="entry name" value="ATPASE_GAMMA"/>
    <property type="match status" value="1"/>
</dbReference>
<protein>
    <recommendedName>
        <fullName evidence="1">ATP synthase gamma chain</fullName>
    </recommendedName>
    <alternativeName>
        <fullName evidence="1">ATP synthase F1 sector gamma subunit</fullName>
    </alternativeName>
    <alternativeName>
        <fullName evidence="1">F-ATPase gamma subunit</fullName>
    </alternativeName>
</protein>
<comment type="function">
    <text evidence="1">Produces ATP from ADP in the presence of a proton gradient across the membrane. The gamma chain is believed to be important in regulating ATPase activity and the flow of protons through the CF(0) complex.</text>
</comment>
<comment type="subunit">
    <text evidence="1">F-type ATPases have 2 components, CF(1) - the catalytic core - and CF(0) - the membrane proton channel. CF(1) has five subunits: alpha(3), beta(3), gamma(1), delta(1), epsilon(1). CF(0) has three main subunits: a, b and c.</text>
</comment>
<comment type="subcellular location">
    <subcellularLocation>
        <location evidence="1">Cell inner membrane</location>
        <topology evidence="1">Peripheral membrane protein</topology>
    </subcellularLocation>
</comment>
<comment type="similarity">
    <text evidence="1">Belongs to the ATPase gamma chain family.</text>
</comment>
<name>ATPG_PSEPK</name>
<gene>
    <name evidence="1" type="primary">atpG</name>
    <name type="ordered locus">PP_5414</name>
</gene>
<proteinExistence type="inferred from homology"/>
<accession>Q88BX3</accession>
<evidence type="ECO:0000255" key="1">
    <source>
        <dbReference type="HAMAP-Rule" id="MF_00815"/>
    </source>
</evidence>